<protein>
    <recommendedName>
        <fullName evidence="5">Acrylate reductase cytochrome subunit</fullName>
        <ecNumber evidence="6">1.3.2.-</ecNumber>
    </recommendedName>
</protein>
<feature type="signal peptide" evidence="2">
    <location>
        <begin position="1"/>
        <end position="22"/>
    </location>
</feature>
<feature type="chain" id="PRO_5002764684" description="Acrylate reductase cytochrome subunit">
    <location>
        <begin position="23"/>
        <end position="117"/>
    </location>
</feature>
<feature type="binding site" description="axial binding residue" evidence="1">
    <location>
        <position position="29"/>
    </location>
    <ligand>
        <name>heme c</name>
        <dbReference type="ChEBI" id="CHEBI:61717"/>
        <label>2</label>
    </ligand>
    <ligandPart>
        <name>Fe</name>
        <dbReference type="ChEBI" id="CHEBI:18248"/>
    </ligandPart>
</feature>
<feature type="binding site" description="covalent" evidence="1">
    <location>
        <position position="37"/>
    </location>
    <ligand>
        <name>heme c</name>
        <dbReference type="ChEBI" id="CHEBI:61717"/>
        <label>1</label>
    </ligand>
</feature>
<feature type="binding site" description="covalent" evidence="1">
    <location>
        <position position="40"/>
    </location>
    <ligand>
        <name>heme c</name>
        <dbReference type="ChEBI" id="CHEBI:61717"/>
        <label>1</label>
    </ligand>
</feature>
<feature type="binding site" description="axial binding residue" evidence="1">
    <location>
        <position position="41"/>
    </location>
    <ligand>
        <name>heme c</name>
        <dbReference type="ChEBI" id="CHEBI:61717"/>
        <label>1</label>
    </ligand>
    <ligandPart>
        <name>Fe</name>
        <dbReference type="ChEBI" id="CHEBI:18248"/>
    </ligandPart>
</feature>
<feature type="binding site" description="covalent" evidence="1">
    <location>
        <position position="54"/>
    </location>
    <ligand>
        <name>heme c</name>
        <dbReference type="ChEBI" id="CHEBI:61717"/>
        <label>2</label>
    </ligand>
</feature>
<feature type="binding site" description="covalent" evidence="1">
    <location>
        <position position="57"/>
    </location>
    <ligand>
        <name>heme c</name>
        <dbReference type="ChEBI" id="CHEBI:61717"/>
        <label>2</label>
    </ligand>
</feature>
<feature type="binding site" description="axial binding residue" evidence="1">
    <location>
        <position position="58"/>
    </location>
    <ligand>
        <name>heme c</name>
        <dbReference type="ChEBI" id="CHEBI:61717"/>
        <label>2</label>
    </ligand>
    <ligandPart>
        <name>Fe</name>
        <dbReference type="ChEBI" id="CHEBI:18248"/>
    </ligandPart>
</feature>
<feature type="binding site" description="axial binding residue" evidence="1">
    <location>
        <position position="79"/>
    </location>
    <ligand>
        <name>heme c</name>
        <dbReference type="ChEBI" id="CHEBI:61717"/>
        <label>3</label>
    </ligand>
    <ligandPart>
        <name>Fe</name>
        <dbReference type="ChEBI" id="CHEBI:18248"/>
    </ligandPart>
</feature>
<feature type="binding site" description="axial binding residue" evidence="1">
    <location>
        <position position="83"/>
    </location>
    <ligand>
        <name>heme c</name>
        <dbReference type="ChEBI" id="CHEBI:61717"/>
        <label>4</label>
    </ligand>
    <ligandPart>
        <name>Fe</name>
        <dbReference type="ChEBI" id="CHEBI:18248"/>
    </ligandPart>
</feature>
<feature type="binding site" description="covalent" evidence="1">
    <location>
        <position position="90"/>
    </location>
    <ligand>
        <name>heme c</name>
        <dbReference type="ChEBI" id="CHEBI:61717"/>
        <label>3</label>
    </ligand>
</feature>
<feature type="binding site" description="covalent" evidence="1">
    <location>
        <position position="93"/>
    </location>
    <ligand>
        <name>heme c</name>
        <dbReference type="ChEBI" id="CHEBI:61717"/>
        <label>3</label>
    </ligand>
</feature>
<feature type="binding site" description="axial binding residue" evidence="1">
    <location>
        <position position="94"/>
    </location>
    <ligand>
        <name>heme c</name>
        <dbReference type="ChEBI" id="CHEBI:61717"/>
        <label>3</label>
    </ligand>
    <ligandPart>
        <name>Fe</name>
        <dbReference type="ChEBI" id="CHEBI:18248"/>
    </ligandPart>
</feature>
<feature type="binding site" description="axial binding residue" evidence="1">
    <location>
        <position position="97"/>
    </location>
    <ligand>
        <name>heme c</name>
        <dbReference type="ChEBI" id="CHEBI:61717"/>
        <label>1</label>
    </ligand>
    <ligandPart>
        <name>Fe</name>
        <dbReference type="ChEBI" id="CHEBI:18248"/>
    </ligandPart>
</feature>
<feature type="binding site" description="covalent" evidence="1">
    <location>
        <position position="104"/>
    </location>
    <ligand>
        <name>heme c</name>
        <dbReference type="ChEBI" id="CHEBI:61717"/>
        <label>4</label>
    </ligand>
</feature>
<feature type="binding site" description="covalent" evidence="1">
    <location>
        <position position="107"/>
    </location>
    <ligand>
        <name>heme c</name>
        <dbReference type="ChEBI" id="CHEBI:61717"/>
        <label>4</label>
    </ligand>
</feature>
<feature type="binding site" description="axial binding residue" evidence="1">
    <location>
        <position position="108"/>
    </location>
    <ligand>
        <name>heme c</name>
        <dbReference type="ChEBI" id="CHEBI:61717"/>
        <label>4</label>
    </ligand>
    <ligandPart>
        <name>Fe</name>
        <dbReference type="ChEBI" id="CHEBI:18248"/>
    </ligandPart>
</feature>
<sequence>MKMYKLMLGLVLAGLVSLSAQAIEQRDYHKEVIGKDCKSCHDQGVKNYPSDQACLQCHDVDELAEETARSEEDKWQNPHNNLHYGKELPCIECHGEHEAKKPICSNCHTFKYDKHKE</sequence>
<name>ARDB_SHEWM</name>
<dbReference type="EC" id="1.3.2.-" evidence="6"/>
<dbReference type="EMBL" id="CP000961">
    <property type="protein sequence ID" value="ACA84577.1"/>
    <property type="molecule type" value="Genomic_DNA"/>
</dbReference>
<dbReference type="RefSeq" id="WP_012322926.1">
    <property type="nucleotide sequence ID" value="NC_010506.1"/>
</dbReference>
<dbReference type="STRING" id="392500.Swoo_0276"/>
<dbReference type="KEGG" id="swd:Swoo_0276"/>
<dbReference type="eggNOG" id="COG0484">
    <property type="taxonomic scope" value="Bacteria"/>
</dbReference>
<dbReference type="HOGENOM" id="CLU_136713_1_1_6"/>
<dbReference type="Proteomes" id="UP000002168">
    <property type="component" value="Chromosome"/>
</dbReference>
<dbReference type="GO" id="GO:0042597">
    <property type="term" value="C:periplasmic space"/>
    <property type="evidence" value="ECO:0007669"/>
    <property type="project" value="UniProtKB-SubCell"/>
</dbReference>
<dbReference type="GO" id="GO:0046872">
    <property type="term" value="F:metal ion binding"/>
    <property type="evidence" value="ECO:0007669"/>
    <property type="project" value="UniProtKB-KW"/>
</dbReference>
<dbReference type="GO" id="GO:0016491">
    <property type="term" value="F:oxidoreductase activity"/>
    <property type="evidence" value="ECO:0007669"/>
    <property type="project" value="UniProtKB-KW"/>
</dbReference>
<dbReference type="CDD" id="cd08168">
    <property type="entry name" value="Cytochrom_C3"/>
    <property type="match status" value="1"/>
</dbReference>
<dbReference type="Gene3D" id="1.10.1130.10">
    <property type="entry name" value="Flavocytochrome C3, Chain A"/>
    <property type="match status" value="1"/>
</dbReference>
<dbReference type="InterPro" id="IPR036280">
    <property type="entry name" value="Multihaem_cyt_sf"/>
</dbReference>
<dbReference type="InterPro" id="IPR012286">
    <property type="entry name" value="Tetrahaem_cytochrome"/>
</dbReference>
<dbReference type="Pfam" id="PF14537">
    <property type="entry name" value="Cytochrom_c3_2"/>
    <property type="match status" value="1"/>
</dbReference>
<dbReference type="SUPFAM" id="SSF48695">
    <property type="entry name" value="Multiheme cytochromes"/>
    <property type="match status" value="1"/>
</dbReference>
<dbReference type="PROSITE" id="PS51008">
    <property type="entry name" value="MULTIHEME_CYTC"/>
    <property type="match status" value="1"/>
</dbReference>
<comment type="function">
    <text evidence="3">Heme c-containing subunit of the ArdAB flavocytochrome c, which catalyzes the reduction of acrylate to propanoate and supports dimethylsulfoniopropionate-dependent anaerobic respiration (PubMed:38831506). In vitro, can use the artificial electron donor methyl viologen (PubMed:38831506). The natural electron donor is probably a low-potential cytochrome c (PubMed:38831506). Also shows weak activity toward methacrylate in vitro (at a 22-fold lower rate) but cannot use other tested 2-enoates, including crotonic, fumaric, sorbic, urocanic, cinnamic, p-coumaric, caffeic or ferulic acids (PubMed:38831506). The protein catalyzes a unidirectional reaction and cannot oxidize propanoate with phenazine metasulfate and dichlorophenolindophenol as electron acceptors (PubMed:38831506).</text>
</comment>
<comment type="cofactor">
    <cofactor evidence="1">
        <name>heme c</name>
        <dbReference type="ChEBI" id="CHEBI:61717"/>
    </cofactor>
    <text evidence="1">Binds 4 heme c groups per subunit.</text>
</comment>
<comment type="activity regulation">
    <text evidence="3">Methacrylate acts as a competitive inhibitor of the acrylate reductase activity and suppresses the reductase activity in dose-dependent manner.</text>
</comment>
<comment type="biophysicochemical properties">
    <kinetics>
        <KM evidence="3">16 uM for acrylate (in the presence of reduced methyl viologen)</KM>
        <KM evidence="3">19 uM for methacrylate (in the presence of reduced methyl viologen)</KM>
        <Vmax evidence="3">58.0 umol/min/mg enzyme with acrylate as substrate (in the presence of reduced methyl viologen)</Vmax>
        <Vmax evidence="3">2.6 umol/min/mg enzyme with methacrylate as substrate (in the presence of reduced methyl viologen)</Vmax>
    </kinetics>
    <phDependence>
        <text evidence="3">Optimum pH is 7.5.</text>
    </phDependence>
</comment>
<comment type="subunit">
    <text evidence="3">The ArdAB flavocytochrome c is composed of a FAD-containing subunit (ArdA) and a heme c-containing subunit (ArdB).</text>
</comment>
<comment type="subcellular location">
    <subcellularLocation>
        <location evidence="3">Periplasm</location>
    </subcellularLocation>
</comment>
<comment type="induction">
    <text evidence="3">Part of the ard operon, which is induced under anaerobic conditions (PubMed:38831506). Expression is further induced by acrylate and methacrylate (PubMed:38831506). Not induced under aerobic conditions (PubMed:38831506).</text>
</comment>
<accession>B1KN80</accession>
<evidence type="ECO:0000250" key="1">
    <source>
        <dbReference type="UniProtKB" id="P0C278"/>
    </source>
</evidence>
<evidence type="ECO:0000255" key="2"/>
<evidence type="ECO:0000269" key="3">
    <source>
    </source>
</evidence>
<evidence type="ECO:0000303" key="4">
    <source>
    </source>
</evidence>
<evidence type="ECO:0000305" key="5"/>
<evidence type="ECO:0000305" key="6">
    <source>
    </source>
</evidence>
<evidence type="ECO:0000312" key="7">
    <source>
        <dbReference type="EMBL" id="ACA84577.1"/>
    </source>
</evidence>
<keyword id="KW-0249">Electron transport</keyword>
<keyword id="KW-0349">Heme</keyword>
<keyword id="KW-0408">Iron</keyword>
<keyword id="KW-0479">Metal-binding</keyword>
<keyword id="KW-0560">Oxidoreductase</keyword>
<keyword id="KW-0574">Periplasm</keyword>
<keyword id="KW-1185">Reference proteome</keyword>
<keyword id="KW-0732">Signal</keyword>
<keyword id="KW-0813">Transport</keyword>
<reference key="1">
    <citation type="submission" date="2008-02" db="EMBL/GenBank/DDBJ databases">
        <title>Complete sequence of Shewanella woodyi ATCC 51908.</title>
        <authorList>
            <consortium name="US DOE Joint Genome Institute"/>
            <person name="Copeland A."/>
            <person name="Lucas S."/>
            <person name="Lapidus A."/>
            <person name="Glavina del Rio T."/>
            <person name="Dalin E."/>
            <person name="Tice H."/>
            <person name="Bruce D."/>
            <person name="Goodwin L."/>
            <person name="Pitluck S."/>
            <person name="Sims D."/>
            <person name="Brettin T."/>
            <person name="Detter J.C."/>
            <person name="Han C."/>
            <person name="Kuske C.R."/>
            <person name="Schmutz J."/>
            <person name="Larimer F."/>
            <person name="Land M."/>
            <person name="Hauser L."/>
            <person name="Kyrpides N."/>
            <person name="Lykidis A."/>
            <person name="Zhao J.-S."/>
            <person name="Richardson P."/>
        </authorList>
    </citation>
    <scope>NUCLEOTIDE SEQUENCE [LARGE SCALE GENOMIC DNA]</scope>
    <source>
        <strain>ATCC 51908 / MS32</strain>
    </source>
</reference>
<reference key="2">
    <citation type="journal article" date="2024" name="Biochemistry (Mosc.)">
        <title>Acrylate Reductase of an Anaerobic Electron Transport Chain of the Marine Bacterium Shewanella woodyi.</title>
        <authorList>
            <person name="Bertsova Y.V."/>
            <person name="Serebryakova M.V."/>
            <person name="Bogachev V.A."/>
            <person name="Baykov A.A."/>
            <person name="Bogachev A.V."/>
        </authorList>
    </citation>
    <scope>FUNCTION AS AN ACRYLATE REDUCTASE</scope>
    <scope>ACTIVITY REGULATION</scope>
    <scope>BIOPHYSICOCHEMICAL PROPERTIES</scope>
    <scope>SUBUNIT</scope>
    <scope>SUBCELLULAR LOCATION</scope>
    <scope>INDUCTION</scope>
</reference>
<organism>
    <name type="scientific">Shewanella woodyi (strain ATCC 51908 / MS32)</name>
    <dbReference type="NCBI Taxonomy" id="392500"/>
    <lineage>
        <taxon>Bacteria</taxon>
        <taxon>Pseudomonadati</taxon>
        <taxon>Pseudomonadota</taxon>
        <taxon>Gammaproteobacteria</taxon>
        <taxon>Alteromonadales</taxon>
        <taxon>Shewanellaceae</taxon>
        <taxon>Shewanella</taxon>
    </lineage>
</organism>
<proteinExistence type="evidence at protein level"/>
<gene>
    <name evidence="4" type="primary">ardB</name>
    <name evidence="7" type="ordered locus">Swoo_0276</name>
</gene>